<proteinExistence type="inferred from homology"/>
<name>RDRP_LDCPR</name>
<evidence type="ECO:0000250" key="1"/>
<evidence type="ECO:0000255" key="2">
    <source>
        <dbReference type="PROSITE-ProRule" id="PRU00539"/>
    </source>
</evidence>
<evidence type="ECO:0000305" key="3"/>
<sequence>MLPNTELHTTEFSKTRKFTRQSFKQIEQLTASLANDRVARHKFLFNNSLPLISDYSGEDSNGHQLQATIKIPDEITNPKEYDPSDYPLAEDESFFKQGHKYDYLVTFRAGSLTNTYEPKTKMYKLHAALDRLMHVKQRKSRFADLWRELCAVIASLDVWYQTTNYPLRTYVKFLFHKGDEFPFYESPSQDKIVFNDKSVASILPTFVYTCCQVGTAIMSGILTHVESIAAMNHFLHCAKDSYIDEKLKVKGIGRSWYQEALHNVGQVTVPVWSQFNEIIGHRTKNTSEPHFVSATFTALRAKRAELLYSEFNDYINRALRLSKTQNDVANYYAACRAMTNDGTFLATLTELSLDAAVFPRIEQRLVTRPAVLMSNARHESLRQKYTDGVGSIAQSYLSSFTDEVARRVNGIHHDEAWLNFLTTSSPGRKLTEIEKLEVGGDVAAWSNSRIVMQAVFAREYRTPERIFKSLKAPIKLVERQQSDRRQRAISGLDNDRLFLSFMPYTIGKQIYDLNDNAAQGKQAGNAFDIGEMLYWTSQRNVLLSSIDVAGMDASVTTNTKDIYNTFVLDVASKCTVPRFGPYYAKNMEVFEVGKRQSQVKYVNAAWQACALEAANSQTSTSYESEIFGQVKNAEGTYPSGRADTSTHHTVLLQGLVRGNELKRASDGKNSCLATIKILGDDIMEIFQGSQDDTHHHAVSNANVLNESGFATTAELSQNSIVLLQQLVVNGTFWGFADRISLWTREDTKDIGRLNLAMMELNALLDDLLFRVRRPEGLKMLGFFCGAICLRRFTLSVDNNLYDSTYNSLSKYMTLIKYDKNPDFDSTLMSLILPLTWLFMPRGGEYPAYPFERRDGTFTEDESMFTARGAYKRRLLYDISNIREMIQQNSLALDDELLHEYGFTGASLLIDLNILDLIDEVKKEDISPVKVSELATSLEQLGKLGEREKSRRAASDLKVRGHALSNDIVYGYGLQEKIQKSAMATKETTVQSKRISLRLHEVIATKTRDYRIPTTPADALHLYEFEGEEVVMDLLPHAKHTSYSNLAYNMSFGSDGWFAFALLGGLDRSAILLRLDVASIRGNYHKFSYDDPVFKQGYKIYKSDATSLDDFFIAISAGPKEQGILLRAFAYYSLYGNVEYHYVLSPRQLFFLSDNPVSAERLVRIPPSYYVSTQCRALYNIFSYLHILRSITSHEGKRLKMVLHAGLIAYVRGTSSSAILPEADTV</sequence>
<feature type="chain" id="PRO_0000403202" description="RNA-directed RNA polymerase VP2">
    <location>
        <begin position="1"/>
        <end position="1225"/>
    </location>
</feature>
<feature type="domain" description="RdRp catalytic" evidence="2">
    <location>
        <begin position="497"/>
        <end position="727"/>
    </location>
</feature>
<reference key="1">
    <citation type="submission" date="2001-06" db="EMBL/GenBank/DDBJ databases">
        <title>Identification of dsRNA electrophoretypes of two cypoviruses from a dual infection in gypsy moth, Lymantria dispar.</title>
        <authorList>
            <person name="Rao S."/>
            <person name="Shapiro M."/>
            <person name="Lynn D."/>
            <person name="Hagiwara K."/>
            <person name="Blackmon B."/>
            <person name="Fang G."/>
            <person name="Carner G.R."/>
        </authorList>
    </citation>
    <scope>NUCLEOTIDE SEQUENCE [GENOMIC RNA]</scope>
</reference>
<organismHost>
    <name type="scientific">Lymantria dispar</name>
    <name type="common">Gypsy moth</name>
    <name type="synonym">Porthetria dispar</name>
    <dbReference type="NCBI Taxonomy" id="13123"/>
</organismHost>
<gene>
    <name type="primary">S2</name>
</gene>
<organism>
    <name type="scientific">Lymantria dispar cypovirus 1 (isolate Rao)</name>
    <name type="common">LdCPV-1</name>
    <dbReference type="NCBI Taxonomy" id="648169"/>
    <lineage>
        <taxon>Viruses</taxon>
        <taxon>Riboviria</taxon>
        <taxon>Orthornavirae</taxon>
        <taxon>Duplornaviricota</taxon>
        <taxon>Resentoviricetes</taxon>
        <taxon>Reovirales</taxon>
        <taxon>Spinareoviridae</taxon>
        <taxon>Cypovirus</taxon>
        <taxon>Cypovirus 1</taxon>
    </lineage>
</organism>
<dbReference type="EC" id="2.7.7.48"/>
<dbReference type="EMBL" id="AF389463">
    <property type="protein sequence ID" value="AAK73521.1"/>
    <property type="molecule type" value="Genomic_RNA"/>
</dbReference>
<dbReference type="SMR" id="Q91IE0"/>
<dbReference type="KEGG" id="vg:2598189"/>
<dbReference type="Proteomes" id="UP000006712">
    <property type="component" value="Genome"/>
</dbReference>
<dbReference type="GO" id="GO:0016787">
    <property type="term" value="F:hydrolase activity"/>
    <property type="evidence" value="ECO:0007669"/>
    <property type="project" value="UniProtKB-KW"/>
</dbReference>
<dbReference type="GO" id="GO:0000166">
    <property type="term" value="F:nucleotide binding"/>
    <property type="evidence" value="ECO:0007669"/>
    <property type="project" value="UniProtKB-KW"/>
</dbReference>
<dbReference type="GO" id="GO:0003723">
    <property type="term" value="F:RNA binding"/>
    <property type="evidence" value="ECO:0007669"/>
    <property type="project" value="InterPro"/>
</dbReference>
<dbReference type="GO" id="GO:0003968">
    <property type="term" value="F:RNA-directed RNA polymerase activity"/>
    <property type="evidence" value="ECO:0007669"/>
    <property type="project" value="UniProtKB-KW"/>
</dbReference>
<dbReference type="GO" id="GO:0019079">
    <property type="term" value="P:viral genome replication"/>
    <property type="evidence" value="ECO:0007669"/>
    <property type="project" value="InterPro"/>
</dbReference>
<dbReference type="Gene3D" id="3.90.1850.10">
    <property type="entry name" value="RNA-directed RNA polymerase lambda-3"/>
    <property type="match status" value="1"/>
</dbReference>
<dbReference type="InterPro" id="IPR054002">
    <property type="entry name" value="RdRP_C"/>
</dbReference>
<dbReference type="InterPro" id="IPR054006">
    <property type="entry name" value="RdRP_N"/>
</dbReference>
<dbReference type="InterPro" id="IPR007097">
    <property type="entry name" value="RNA-dir_pol_reovirus"/>
</dbReference>
<dbReference type="Pfam" id="PF22213">
    <property type="entry name" value="CPV_RdRP_C"/>
    <property type="match status" value="1"/>
</dbReference>
<dbReference type="Pfam" id="PF22209">
    <property type="entry name" value="CPV_RdRP_N"/>
    <property type="match status" value="1"/>
</dbReference>
<dbReference type="Pfam" id="PF22212">
    <property type="entry name" value="CPV_RdRP_pol_dom"/>
    <property type="match status" value="1"/>
</dbReference>
<dbReference type="PROSITE" id="PS50523">
    <property type="entry name" value="RDRP_DSRNA_REO"/>
    <property type="match status" value="1"/>
</dbReference>
<protein>
    <recommendedName>
        <fullName>RNA-directed RNA polymerase VP2</fullName>
        <ecNumber>2.7.7.48</ecNumber>
    </recommendedName>
</protein>
<accession>Q91IE0</accession>
<comment type="function">
    <text evidence="2">RNA-directed RNA polymerase that is involved in transcription and genome replication. Following infection, it catalyzes the synthesis of fully conservative plus strands. After core assembly, which consists in recruitment of one capped plus-strand for each genomic segments and polymerase complexes, the polymerase switches mode and catalyzes the synthesis of complementary minus-strands (By similarity).</text>
</comment>
<comment type="catalytic activity">
    <reaction evidence="2">
        <text>RNA(n) + a ribonucleoside 5'-triphosphate = RNA(n+1) + diphosphate</text>
        <dbReference type="Rhea" id="RHEA:21248"/>
        <dbReference type="Rhea" id="RHEA-COMP:14527"/>
        <dbReference type="Rhea" id="RHEA-COMP:17342"/>
        <dbReference type="ChEBI" id="CHEBI:33019"/>
        <dbReference type="ChEBI" id="CHEBI:61557"/>
        <dbReference type="ChEBI" id="CHEBI:140395"/>
        <dbReference type="EC" id="2.7.7.48"/>
    </reaction>
</comment>
<comment type="subunit">
    <text evidence="1">Interacts with VP6.</text>
</comment>
<comment type="similarity">
    <text evidence="3">Belongs to the reoviridae RNA-directed RNA polymerase family.</text>
</comment>
<keyword id="KW-0378">Hydrolase</keyword>
<keyword id="KW-0547">Nucleotide-binding</keyword>
<keyword id="KW-0548">Nucleotidyltransferase</keyword>
<keyword id="KW-1185">Reference proteome</keyword>
<keyword id="KW-0696">RNA-directed RNA polymerase</keyword>
<keyword id="KW-0808">Transferase</keyword>
<keyword id="KW-0693">Viral RNA replication</keyword>